<sequence length="496" mass="52337">MHAKSLTELRAALDAKECSAVELAQHYLKRIDAARDLNAFVHVDAELTLAQAKAADAALAKGEAGPLAGLPIAHKDVFVTRGWRSTAGSKMLANYASPFDATVVARLSAAGMVTLGKTNMDEFAMGSSNENSAFGPVKNPWDTNAVPGGSSGGSSAAVAARLAPAATGTDTGGSIRQPASFAGVTGIKPTYGRVSRYGMIAFASSLDQGGPMARSAADCALLLNAMAGFDERDSTSLERADEDYTRHLGKTWAAGGDAGKPLAGLRIGLPAEYFGAGLADDVRAAIDAALKTYETLGATLVPVSLPKTELSIPVYYVIAPAEASSNLSRFDGVRYGHRAAEYRDLLDMYKKSRAEGFGPEVKRRILVGTYVLSHGYYDAYYLQAQKIRRIIAQDFQEAFKSCDVIMGPASPTVAWDIGAKGDDPVQMYLADIYTLSVSLAGLPGMSVPCGFGAGANAKRPVGLQIIGNYFDEARMLQVADAFQRATDWHVQEPAGV</sequence>
<organism>
    <name type="scientific">Burkholderia thailandensis (strain ATCC 700388 / DSM 13276 / CCUG 48851 / CIP 106301 / E264)</name>
    <dbReference type="NCBI Taxonomy" id="271848"/>
    <lineage>
        <taxon>Bacteria</taxon>
        <taxon>Pseudomonadati</taxon>
        <taxon>Pseudomonadota</taxon>
        <taxon>Betaproteobacteria</taxon>
        <taxon>Burkholderiales</taxon>
        <taxon>Burkholderiaceae</taxon>
        <taxon>Burkholderia</taxon>
        <taxon>pseudomallei group</taxon>
    </lineage>
</organism>
<accession>Q2T293</accession>
<keyword id="KW-0067">ATP-binding</keyword>
<keyword id="KW-0436">Ligase</keyword>
<keyword id="KW-0547">Nucleotide-binding</keyword>
<keyword id="KW-0648">Protein biosynthesis</keyword>
<dbReference type="EC" id="6.3.5.7" evidence="1"/>
<dbReference type="EMBL" id="CP000086">
    <property type="protein sequence ID" value="ABC39463.1"/>
    <property type="molecule type" value="Genomic_DNA"/>
</dbReference>
<dbReference type="RefSeq" id="WP_009893590.1">
    <property type="nucleotide sequence ID" value="NZ_CP008785.1"/>
</dbReference>
<dbReference type="SMR" id="Q2T293"/>
<dbReference type="GeneID" id="45119920"/>
<dbReference type="KEGG" id="bte:BTH_I0148"/>
<dbReference type="HOGENOM" id="CLU_009600_0_3_4"/>
<dbReference type="Proteomes" id="UP000001930">
    <property type="component" value="Chromosome I"/>
</dbReference>
<dbReference type="GO" id="GO:0030956">
    <property type="term" value="C:glutamyl-tRNA(Gln) amidotransferase complex"/>
    <property type="evidence" value="ECO:0007669"/>
    <property type="project" value="InterPro"/>
</dbReference>
<dbReference type="GO" id="GO:0005524">
    <property type="term" value="F:ATP binding"/>
    <property type="evidence" value="ECO:0007669"/>
    <property type="project" value="UniProtKB-KW"/>
</dbReference>
<dbReference type="GO" id="GO:0050567">
    <property type="term" value="F:glutaminyl-tRNA synthase (glutamine-hydrolyzing) activity"/>
    <property type="evidence" value="ECO:0007669"/>
    <property type="project" value="UniProtKB-UniRule"/>
</dbReference>
<dbReference type="GO" id="GO:0006412">
    <property type="term" value="P:translation"/>
    <property type="evidence" value="ECO:0007669"/>
    <property type="project" value="UniProtKB-UniRule"/>
</dbReference>
<dbReference type="Gene3D" id="3.90.1300.10">
    <property type="entry name" value="Amidase signature (AS) domain"/>
    <property type="match status" value="1"/>
</dbReference>
<dbReference type="HAMAP" id="MF_00120">
    <property type="entry name" value="GatA"/>
    <property type="match status" value="1"/>
</dbReference>
<dbReference type="InterPro" id="IPR000120">
    <property type="entry name" value="Amidase"/>
</dbReference>
<dbReference type="InterPro" id="IPR020556">
    <property type="entry name" value="Amidase_CS"/>
</dbReference>
<dbReference type="InterPro" id="IPR023631">
    <property type="entry name" value="Amidase_dom"/>
</dbReference>
<dbReference type="InterPro" id="IPR036928">
    <property type="entry name" value="AS_sf"/>
</dbReference>
<dbReference type="InterPro" id="IPR004412">
    <property type="entry name" value="GatA"/>
</dbReference>
<dbReference type="NCBIfam" id="TIGR00132">
    <property type="entry name" value="gatA"/>
    <property type="match status" value="1"/>
</dbReference>
<dbReference type="PANTHER" id="PTHR11895:SF151">
    <property type="entry name" value="GLUTAMYL-TRNA(GLN) AMIDOTRANSFERASE SUBUNIT A"/>
    <property type="match status" value="1"/>
</dbReference>
<dbReference type="PANTHER" id="PTHR11895">
    <property type="entry name" value="TRANSAMIDASE"/>
    <property type="match status" value="1"/>
</dbReference>
<dbReference type="Pfam" id="PF01425">
    <property type="entry name" value="Amidase"/>
    <property type="match status" value="1"/>
</dbReference>
<dbReference type="SUPFAM" id="SSF75304">
    <property type="entry name" value="Amidase signature (AS) enzymes"/>
    <property type="match status" value="1"/>
</dbReference>
<dbReference type="PROSITE" id="PS00571">
    <property type="entry name" value="AMIDASES"/>
    <property type="match status" value="1"/>
</dbReference>
<proteinExistence type="inferred from homology"/>
<gene>
    <name evidence="1" type="primary">gatA</name>
    <name type="ordered locus">BTH_I0148</name>
</gene>
<comment type="function">
    <text evidence="1">Allows the formation of correctly charged Gln-tRNA(Gln) through the transamidation of misacylated Glu-tRNA(Gln) in organisms which lack glutaminyl-tRNA synthetase. The reaction takes place in the presence of glutamine and ATP through an activated gamma-phospho-Glu-tRNA(Gln).</text>
</comment>
<comment type="catalytic activity">
    <reaction evidence="1">
        <text>L-glutamyl-tRNA(Gln) + L-glutamine + ATP + H2O = L-glutaminyl-tRNA(Gln) + L-glutamate + ADP + phosphate + H(+)</text>
        <dbReference type="Rhea" id="RHEA:17521"/>
        <dbReference type="Rhea" id="RHEA-COMP:9681"/>
        <dbReference type="Rhea" id="RHEA-COMP:9684"/>
        <dbReference type="ChEBI" id="CHEBI:15377"/>
        <dbReference type="ChEBI" id="CHEBI:15378"/>
        <dbReference type="ChEBI" id="CHEBI:29985"/>
        <dbReference type="ChEBI" id="CHEBI:30616"/>
        <dbReference type="ChEBI" id="CHEBI:43474"/>
        <dbReference type="ChEBI" id="CHEBI:58359"/>
        <dbReference type="ChEBI" id="CHEBI:78520"/>
        <dbReference type="ChEBI" id="CHEBI:78521"/>
        <dbReference type="ChEBI" id="CHEBI:456216"/>
        <dbReference type="EC" id="6.3.5.7"/>
    </reaction>
</comment>
<comment type="subunit">
    <text evidence="1">Heterotrimer of A, B and C subunits.</text>
</comment>
<comment type="similarity">
    <text evidence="1">Belongs to the amidase family. GatA subfamily.</text>
</comment>
<name>GATA_BURTA</name>
<feature type="chain" id="PRO_0000241084" description="Glutamyl-tRNA(Gln) amidotransferase subunit A">
    <location>
        <begin position="1"/>
        <end position="496"/>
    </location>
</feature>
<feature type="active site" description="Charge relay system" evidence="1">
    <location>
        <position position="75"/>
    </location>
</feature>
<feature type="active site" description="Charge relay system" evidence="1">
    <location>
        <position position="150"/>
    </location>
</feature>
<feature type="active site" description="Acyl-ester intermediate" evidence="1">
    <location>
        <position position="174"/>
    </location>
</feature>
<protein>
    <recommendedName>
        <fullName evidence="1">Glutamyl-tRNA(Gln) amidotransferase subunit A</fullName>
        <shortName evidence="1">Glu-ADT subunit A</shortName>
        <ecNumber evidence="1">6.3.5.7</ecNumber>
    </recommendedName>
</protein>
<reference key="1">
    <citation type="journal article" date="2005" name="BMC Genomics">
        <title>Bacterial genome adaptation to niches: divergence of the potential virulence genes in three Burkholderia species of different survival strategies.</title>
        <authorList>
            <person name="Kim H.S."/>
            <person name="Schell M.A."/>
            <person name="Yu Y."/>
            <person name="Ulrich R.L."/>
            <person name="Sarria S.H."/>
            <person name="Nierman W.C."/>
            <person name="DeShazer D."/>
        </authorList>
    </citation>
    <scope>NUCLEOTIDE SEQUENCE [LARGE SCALE GENOMIC DNA]</scope>
    <source>
        <strain>ATCC 700388 / DSM 13276 / CCUG 48851 / CIP 106301 / E264</strain>
    </source>
</reference>
<evidence type="ECO:0000255" key="1">
    <source>
        <dbReference type="HAMAP-Rule" id="MF_00120"/>
    </source>
</evidence>